<evidence type="ECO:0000255" key="1">
    <source>
        <dbReference type="HAMAP-Rule" id="MF_00163"/>
    </source>
</evidence>
<reference key="1">
    <citation type="journal article" date="2005" name="Proc. Natl. Acad. Sci. U.S.A.">
        <title>Genome analysis of multiple pathogenic isolates of Streptococcus agalactiae: implications for the microbial 'pan-genome'.</title>
        <authorList>
            <person name="Tettelin H."/>
            <person name="Masignani V."/>
            <person name="Cieslewicz M.J."/>
            <person name="Donati C."/>
            <person name="Medini D."/>
            <person name="Ward N.L."/>
            <person name="Angiuoli S.V."/>
            <person name="Crabtree J."/>
            <person name="Jones A.L."/>
            <person name="Durkin A.S."/>
            <person name="DeBoy R.T."/>
            <person name="Davidsen T.M."/>
            <person name="Mora M."/>
            <person name="Scarselli M."/>
            <person name="Margarit y Ros I."/>
            <person name="Peterson J.D."/>
            <person name="Hauser C.R."/>
            <person name="Sundaram J.P."/>
            <person name="Nelson W.C."/>
            <person name="Madupu R."/>
            <person name="Brinkac L.M."/>
            <person name="Dodson R.J."/>
            <person name="Rosovitz M.J."/>
            <person name="Sullivan S.A."/>
            <person name="Daugherty S.C."/>
            <person name="Haft D.H."/>
            <person name="Selengut J."/>
            <person name="Gwinn M.L."/>
            <person name="Zhou L."/>
            <person name="Zafar N."/>
            <person name="Khouri H."/>
            <person name="Radune D."/>
            <person name="Dimitrov G."/>
            <person name="Watkins K."/>
            <person name="O'Connor K.J."/>
            <person name="Smith S."/>
            <person name="Utterback T.R."/>
            <person name="White O."/>
            <person name="Rubens C.E."/>
            <person name="Grandi G."/>
            <person name="Madoff L.C."/>
            <person name="Kasper D.L."/>
            <person name="Telford J.L."/>
            <person name="Wessels M.R."/>
            <person name="Rappuoli R."/>
            <person name="Fraser C.M."/>
        </authorList>
    </citation>
    <scope>NUCLEOTIDE SEQUENCE [LARGE SCALE GENOMIC DNA]</scope>
    <source>
        <strain>ATCC 27591 / A909 / CDC SS700</strain>
    </source>
</reference>
<accession>Q3JZ45</accession>
<proteinExistence type="inferred from homology"/>
<keyword id="KW-0378">Hydrolase</keyword>
<keyword id="KW-0408">Iron</keyword>
<keyword id="KW-0479">Metal-binding</keyword>
<keyword id="KW-0648">Protein biosynthesis</keyword>
<dbReference type="EC" id="3.5.1.88" evidence="1"/>
<dbReference type="EMBL" id="CP000114">
    <property type="protein sequence ID" value="ABA45857.1"/>
    <property type="molecule type" value="Genomic_DNA"/>
</dbReference>
<dbReference type="RefSeq" id="WP_001272875.1">
    <property type="nucleotide sequence ID" value="NC_007432.1"/>
</dbReference>
<dbReference type="SMR" id="Q3JZ45"/>
<dbReference type="GeneID" id="66886680"/>
<dbReference type="KEGG" id="sak:SAK_1863"/>
<dbReference type="HOGENOM" id="CLU_061901_4_0_9"/>
<dbReference type="GO" id="GO:0046872">
    <property type="term" value="F:metal ion binding"/>
    <property type="evidence" value="ECO:0007669"/>
    <property type="project" value="UniProtKB-KW"/>
</dbReference>
<dbReference type="GO" id="GO:0042586">
    <property type="term" value="F:peptide deformylase activity"/>
    <property type="evidence" value="ECO:0007669"/>
    <property type="project" value="UniProtKB-UniRule"/>
</dbReference>
<dbReference type="GO" id="GO:0043686">
    <property type="term" value="P:co-translational protein modification"/>
    <property type="evidence" value="ECO:0007669"/>
    <property type="project" value="TreeGrafter"/>
</dbReference>
<dbReference type="GO" id="GO:0006412">
    <property type="term" value="P:translation"/>
    <property type="evidence" value="ECO:0007669"/>
    <property type="project" value="UniProtKB-UniRule"/>
</dbReference>
<dbReference type="CDD" id="cd00487">
    <property type="entry name" value="Pep_deformylase"/>
    <property type="match status" value="1"/>
</dbReference>
<dbReference type="FunFam" id="3.90.45.10:FF:000002">
    <property type="entry name" value="Peptide deformylase"/>
    <property type="match status" value="1"/>
</dbReference>
<dbReference type="Gene3D" id="3.90.45.10">
    <property type="entry name" value="Peptide deformylase"/>
    <property type="match status" value="1"/>
</dbReference>
<dbReference type="HAMAP" id="MF_00163">
    <property type="entry name" value="Pep_deformylase"/>
    <property type="match status" value="1"/>
</dbReference>
<dbReference type="InterPro" id="IPR023635">
    <property type="entry name" value="Peptide_deformylase"/>
</dbReference>
<dbReference type="InterPro" id="IPR036821">
    <property type="entry name" value="Peptide_deformylase_sf"/>
</dbReference>
<dbReference type="NCBIfam" id="TIGR00079">
    <property type="entry name" value="pept_deformyl"/>
    <property type="match status" value="1"/>
</dbReference>
<dbReference type="PANTHER" id="PTHR10458">
    <property type="entry name" value="PEPTIDE DEFORMYLASE"/>
    <property type="match status" value="1"/>
</dbReference>
<dbReference type="PANTHER" id="PTHR10458:SF8">
    <property type="entry name" value="PEPTIDE DEFORMYLASE 2"/>
    <property type="match status" value="1"/>
</dbReference>
<dbReference type="Pfam" id="PF01327">
    <property type="entry name" value="Pep_deformylase"/>
    <property type="match status" value="1"/>
</dbReference>
<dbReference type="PIRSF" id="PIRSF004749">
    <property type="entry name" value="Pep_def"/>
    <property type="match status" value="1"/>
</dbReference>
<dbReference type="PRINTS" id="PR01576">
    <property type="entry name" value="PDEFORMYLASE"/>
</dbReference>
<dbReference type="SUPFAM" id="SSF56420">
    <property type="entry name" value="Peptide deformylase"/>
    <property type="match status" value="1"/>
</dbReference>
<organism>
    <name type="scientific">Streptococcus agalactiae serotype Ia (strain ATCC 27591 / A909 / CDC SS700)</name>
    <dbReference type="NCBI Taxonomy" id="205921"/>
    <lineage>
        <taxon>Bacteria</taxon>
        <taxon>Bacillati</taxon>
        <taxon>Bacillota</taxon>
        <taxon>Bacilli</taxon>
        <taxon>Lactobacillales</taxon>
        <taxon>Streptococcaceae</taxon>
        <taxon>Streptococcus</taxon>
    </lineage>
</organism>
<comment type="function">
    <text evidence="1">Removes the formyl group from the N-terminal Met of newly synthesized proteins. Requires at least a dipeptide for an efficient rate of reaction. N-terminal L-methionine is a prerequisite for activity but the enzyme has broad specificity at other positions.</text>
</comment>
<comment type="catalytic activity">
    <reaction evidence="1">
        <text>N-terminal N-formyl-L-methionyl-[peptide] + H2O = N-terminal L-methionyl-[peptide] + formate</text>
        <dbReference type="Rhea" id="RHEA:24420"/>
        <dbReference type="Rhea" id="RHEA-COMP:10639"/>
        <dbReference type="Rhea" id="RHEA-COMP:10640"/>
        <dbReference type="ChEBI" id="CHEBI:15377"/>
        <dbReference type="ChEBI" id="CHEBI:15740"/>
        <dbReference type="ChEBI" id="CHEBI:49298"/>
        <dbReference type="ChEBI" id="CHEBI:64731"/>
        <dbReference type="EC" id="3.5.1.88"/>
    </reaction>
</comment>
<comment type="cofactor">
    <cofactor evidence="1">
        <name>Fe(2+)</name>
        <dbReference type="ChEBI" id="CHEBI:29033"/>
    </cofactor>
    <text evidence="1">Binds 1 Fe(2+) ion.</text>
</comment>
<comment type="similarity">
    <text evidence="1">Belongs to the polypeptide deformylase family.</text>
</comment>
<gene>
    <name evidence="1" type="primary">def</name>
    <name type="ordered locus">SAK_1863</name>
</gene>
<sequence length="204" mass="22830">MSAIDKLVKASHLIDMNDIIREGNPTLRKVAEEVTFPLSEKEEILGEKMMQFLKHSQDPIMAEKLGLRGGVGLAAPQLDISKRIIAVLVPNVEDAQGNPPKEAYSLQEVMYNPKVVSHSVQDAALSDGEGCLSVDREVPGYVVRHARVTIEYFDKTGEKHRLKLKGYNSIVVQHEIDHIDGIMFYDRINEKNPFAVKEGLLILE</sequence>
<protein>
    <recommendedName>
        <fullName evidence="1">Peptide deformylase</fullName>
        <shortName evidence="1">PDF</shortName>
        <ecNumber evidence="1">3.5.1.88</ecNumber>
    </recommendedName>
    <alternativeName>
        <fullName evidence="1">Polypeptide deformylase</fullName>
    </alternativeName>
</protein>
<name>DEF_STRA1</name>
<feature type="chain" id="PRO_0000301101" description="Peptide deformylase">
    <location>
        <begin position="1"/>
        <end position="204"/>
    </location>
</feature>
<feature type="active site" evidence="1">
    <location>
        <position position="175"/>
    </location>
</feature>
<feature type="binding site" evidence="1">
    <location>
        <position position="131"/>
    </location>
    <ligand>
        <name>Fe cation</name>
        <dbReference type="ChEBI" id="CHEBI:24875"/>
    </ligand>
</feature>
<feature type="binding site" evidence="1">
    <location>
        <position position="174"/>
    </location>
    <ligand>
        <name>Fe cation</name>
        <dbReference type="ChEBI" id="CHEBI:24875"/>
    </ligand>
</feature>
<feature type="binding site" evidence="1">
    <location>
        <position position="178"/>
    </location>
    <ligand>
        <name>Fe cation</name>
        <dbReference type="ChEBI" id="CHEBI:24875"/>
    </ligand>
</feature>